<sequence length="464" mass="51028">METEQPEETFPNTETNGEFGKRPAEDMEEEQAFKRSRNTDEMVELRILLQSKNAGAVIGKGGKNIKALRTDYNASVSVPDSSGPERILSISADIETIGEILKKIIPTLEEGLQLPSPTATSQLPLESDAVECLNYQHYKGSDFDCELRLLIHQSLAGGIIGVKGAKIKELRENTQTTIKLFQECCPHSTDRVVLIGGKPDRVVECIKIILDLISESPIKGRAQPYDPNFYDETYDYGGFTMMFDDRRGRPVGFPMRGRGGFDRMPPGRGGRPMPPSRRDYDDMSPRRGPPPPPPGRGGRGGSRARNLPLPPPPPPRGGDLMAYDRRGRPGDRYDGMVGFSADETWDSAIDTWSPSEWQMAYEPQGGSGYDYSYAGGRGSYGDLGGPIITTQVTIPKDLAGSIIGKGGQRIKQIRHESGASIKIDEPLEGSEDRIITITGTQDQIQNAQYLLQNSVKQYADVEGF</sequence>
<accession>Q4R4M6</accession>
<keyword id="KW-0007">Acetylation</keyword>
<keyword id="KW-0010">Activator</keyword>
<keyword id="KW-0965">Cell junction</keyword>
<keyword id="KW-0966">Cell projection</keyword>
<keyword id="KW-0963">Cytoplasm</keyword>
<keyword id="KW-0238">DNA-binding</keyword>
<keyword id="KW-0325">Glycoprotein</keyword>
<keyword id="KW-1017">Isopeptide bond</keyword>
<keyword id="KW-0488">Methylation</keyword>
<keyword id="KW-0507">mRNA processing</keyword>
<keyword id="KW-0508">mRNA splicing</keyword>
<keyword id="KW-0539">Nucleus</keyword>
<keyword id="KW-0597">Phosphoprotein</keyword>
<keyword id="KW-1185">Reference proteome</keyword>
<keyword id="KW-0677">Repeat</keyword>
<keyword id="KW-0678">Repressor</keyword>
<keyword id="KW-0687">Ribonucleoprotein</keyword>
<keyword id="KW-0694">RNA-binding</keyword>
<keyword id="KW-0747">Spliceosome</keyword>
<keyword id="KW-0804">Transcription</keyword>
<keyword id="KW-0805">Transcription regulation</keyword>
<keyword id="KW-0832">Ubl conjugation</keyword>
<proteinExistence type="evidence at transcript level"/>
<reference key="1">
    <citation type="submission" date="2005-06" db="EMBL/GenBank/DDBJ databases">
        <title>DNA sequences of macaque genes expressed in brain or testis and its evolutionary implications.</title>
        <authorList>
            <consortium name="International consortium for macaque cDNA sequencing and analysis"/>
        </authorList>
    </citation>
    <scope>NUCLEOTIDE SEQUENCE [LARGE SCALE MRNA]</scope>
    <source>
        <tissue>Frontal cortex</tissue>
    </source>
</reference>
<name>HNRPK_MACFA</name>
<dbReference type="EMBL" id="AB169868">
    <property type="protein sequence ID" value="BAE01949.1"/>
    <property type="molecule type" value="mRNA"/>
</dbReference>
<dbReference type="RefSeq" id="NP_001270741.1">
    <property type="nucleotide sequence ID" value="NM_001283812.1"/>
</dbReference>
<dbReference type="RefSeq" id="XP_005582093.1">
    <property type="nucleotide sequence ID" value="XM_005582036.2"/>
</dbReference>
<dbReference type="RefSeq" id="XP_005582095.1">
    <property type="nucleotide sequence ID" value="XM_005582038.4"/>
</dbReference>
<dbReference type="RefSeq" id="XP_015291959.1">
    <property type="nucleotide sequence ID" value="XM_015436473.3"/>
</dbReference>
<dbReference type="RefSeq" id="XP_045228977.1">
    <property type="nucleotide sequence ID" value="XM_045373042.2"/>
</dbReference>
<dbReference type="RefSeq" id="XP_065386829.1">
    <property type="nucleotide sequence ID" value="XM_065530757.1"/>
</dbReference>
<dbReference type="SMR" id="Q4R4M6"/>
<dbReference type="STRING" id="9541.ENSMFAP00000001730"/>
<dbReference type="Ensembl" id="ENSMFAT00000000257.2">
    <property type="protein sequence ID" value="ENSMFAP00000001730.1"/>
    <property type="gene ID" value="ENSMFAG00000042755.2"/>
</dbReference>
<dbReference type="GeneID" id="101865058"/>
<dbReference type="CTD" id="3190"/>
<dbReference type="VEuPathDB" id="HostDB:ENSMFAG00000042755"/>
<dbReference type="eggNOG" id="KOG2192">
    <property type="taxonomic scope" value="Eukaryota"/>
</dbReference>
<dbReference type="GeneTree" id="ENSGT00940000153434"/>
<dbReference type="Proteomes" id="UP000233100">
    <property type="component" value="Chromosome 15"/>
</dbReference>
<dbReference type="Bgee" id="ENSMFAG00000042755">
    <property type="expression patterns" value="Expressed in spleen and 13 other cell types or tissues"/>
</dbReference>
<dbReference type="GO" id="GO:0070161">
    <property type="term" value="C:anchoring junction"/>
    <property type="evidence" value="ECO:0007669"/>
    <property type="project" value="UniProtKB-KW"/>
</dbReference>
<dbReference type="GO" id="GO:0071013">
    <property type="term" value="C:catalytic step 2 spliceosome"/>
    <property type="evidence" value="ECO:0007669"/>
    <property type="project" value="Ensembl"/>
</dbReference>
<dbReference type="GO" id="GO:0042995">
    <property type="term" value="C:cell projection"/>
    <property type="evidence" value="ECO:0007669"/>
    <property type="project" value="UniProtKB-KW"/>
</dbReference>
<dbReference type="GO" id="GO:0000785">
    <property type="term" value="C:chromatin"/>
    <property type="evidence" value="ECO:0000250"/>
    <property type="project" value="UniProtKB"/>
</dbReference>
<dbReference type="GO" id="GO:0005737">
    <property type="term" value="C:cytoplasm"/>
    <property type="evidence" value="ECO:0000250"/>
    <property type="project" value="UniProtKB"/>
</dbReference>
<dbReference type="GO" id="GO:0010494">
    <property type="term" value="C:cytoplasmic stress granule"/>
    <property type="evidence" value="ECO:0007669"/>
    <property type="project" value="Ensembl"/>
</dbReference>
<dbReference type="GO" id="GO:0005654">
    <property type="term" value="C:nucleoplasm"/>
    <property type="evidence" value="ECO:0007669"/>
    <property type="project" value="UniProtKB-SubCell"/>
</dbReference>
<dbReference type="GO" id="GO:0005634">
    <property type="term" value="C:nucleus"/>
    <property type="evidence" value="ECO:0000250"/>
    <property type="project" value="UniProtKB"/>
</dbReference>
<dbReference type="GO" id="GO:0002102">
    <property type="term" value="C:podosome"/>
    <property type="evidence" value="ECO:0007669"/>
    <property type="project" value="UniProtKB-SubCell"/>
</dbReference>
<dbReference type="GO" id="GO:1990904">
    <property type="term" value="C:ribonucleoprotein complex"/>
    <property type="evidence" value="ECO:0000250"/>
    <property type="project" value="UniProtKB"/>
</dbReference>
<dbReference type="GO" id="GO:0003677">
    <property type="term" value="F:DNA binding"/>
    <property type="evidence" value="ECO:0007669"/>
    <property type="project" value="UniProtKB-KW"/>
</dbReference>
<dbReference type="GO" id="GO:0042802">
    <property type="term" value="F:identical protein binding"/>
    <property type="evidence" value="ECO:0007669"/>
    <property type="project" value="Ensembl"/>
</dbReference>
<dbReference type="GO" id="GO:0019904">
    <property type="term" value="F:protein domain specific binding"/>
    <property type="evidence" value="ECO:0007669"/>
    <property type="project" value="Ensembl"/>
</dbReference>
<dbReference type="GO" id="GO:0003723">
    <property type="term" value="F:RNA binding"/>
    <property type="evidence" value="ECO:0007669"/>
    <property type="project" value="UniProtKB-KW"/>
</dbReference>
<dbReference type="GO" id="GO:0006397">
    <property type="term" value="P:mRNA processing"/>
    <property type="evidence" value="ECO:0007669"/>
    <property type="project" value="UniProtKB-KW"/>
</dbReference>
<dbReference type="GO" id="GO:0043066">
    <property type="term" value="P:negative regulation of apoptotic process"/>
    <property type="evidence" value="ECO:0007669"/>
    <property type="project" value="Ensembl"/>
</dbReference>
<dbReference type="GO" id="GO:0045892">
    <property type="term" value="P:negative regulation of DNA-templated transcription"/>
    <property type="evidence" value="ECO:0000250"/>
    <property type="project" value="UniProtKB"/>
</dbReference>
<dbReference type="GO" id="GO:0048025">
    <property type="term" value="P:negative regulation of mRNA splicing, via spliceosome"/>
    <property type="evidence" value="ECO:0007669"/>
    <property type="project" value="Ensembl"/>
</dbReference>
<dbReference type="GO" id="GO:0048260">
    <property type="term" value="P:positive regulation of receptor-mediated endocytosis"/>
    <property type="evidence" value="ECO:0007669"/>
    <property type="project" value="Ensembl"/>
</dbReference>
<dbReference type="GO" id="GO:0045944">
    <property type="term" value="P:positive regulation of transcription by RNA polymerase II"/>
    <property type="evidence" value="ECO:0007669"/>
    <property type="project" value="Ensembl"/>
</dbReference>
<dbReference type="GO" id="GO:0060816">
    <property type="term" value="P:random inactivation of X chromosome"/>
    <property type="evidence" value="ECO:0007669"/>
    <property type="project" value="Ensembl"/>
</dbReference>
<dbReference type="GO" id="GO:1902165">
    <property type="term" value="P:regulation of intrinsic apoptotic signaling pathway in response to DNA damage by p53 class mediator"/>
    <property type="evidence" value="ECO:0007669"/>
    <property type="project" value="Ensembl"/>
</dbReference>
<dbReference type="GO" id="GO:0010988">
    <property type="term" value="P:regulation of low-density lipoprotein particle clearance"/>
    <property type="evidence" value="ECO:0007669"/>
    <property type="project" value="Ensembl"/>
</dbReference>
<dbReference type="GO" id="GO:0031048">
    <property type="term" value="P:regulatory ncRNA-mediated heterochromatin formation"/>
    <property type="evidence" value="ECO:0007669"/>
    <property type="project" value="Ensembl"/>
</dbReference>
<dbReference type="GO" id="GO:0008380">
    <property type="term" value="P:RNA splicing"/>
    <property type="evidence" value="ECO:0007669"/>
    <property type="project" value="UniProtKB-KW"/>
</dbReference>
<dbReference type="CDD" id="cd22432">
    <property type="entry name" value="KH-I_HNRNPK_rpt1"/>
    <property type="match status" value="1"/>
</dbReference>
<dbReference type="CDD" id="cd22433">
    <property type="entry name" value="KH-I_HNRNPK_rpt2"/>
    <property type="match status" value="1"/>
</dbReference>
<dbReference type="CDD" id="cd22434">
    <property type="entry name" value="KH-I_HNRNPK_rpt3"/>
    <property type="match status" value="1"/>
</dbReference>
<dbReference type="FunFam" id="3.30.1370.10:FF:000021">
    <property type="entry name" value="Heterogeneous nuclear ribonucleoprotein K, like"/>
    <property type="match status" value="1"/>
</dbReference>
<dbReference type="FunFam" id="3.30.1370.10:FF:000023">
    <property type="entry name" value="Heterogeneous nuclear ribonucleoprotein K, like"/>
    <property type="match status" value="1"/>
</dbReference>
<dbReference type="FunFam" id="3.30.1370.10:FF:000025">
    <property type="entry name" value="Heterogeneous nuclear ribonucleoprotein K, like"/>
    <property type="match status" value="1"/>
</dbReference>
<dbReference type="Gene3D" id="3.30.1370.10">
    <property type="entry name" value="K Homology domain, type 1"/>
    <property type="match status" value="3"/>
</dbReference>
<dbReference type="InterPro" id="IPR004087">
    <property type="entry name" value="KH_dom"/>
</dbReference>
<dbReference type="InterPro" id="IPR004088">
    <property type="entry name" value="KH_dom_type_1"/>
</dbReference>
<dbReference type="InterPro" id="IPR036612">
    <property type="entry name" value="KH_dom_type_1_sf"/>
</dbReference>
<dbReference type="InterPro" id="IPR012987">
    <property type="entry name" value="ROK_N"/>
</dbReference>
<dbReference type="PANTHER" id="PTHR10288">
    <property type="entry name" value="KH DOMAIN CONTAINING RNA BINDING PROTEIN"/>
    <property type="match status" value="1"/>
</dbReference>
<dbReference type="Pfam" id="PF00013">
    <property type="entry name" value="KH_1"/>
    <property type="match status" value="3"/>
</dbReference>
<dbReference type="Pfam" id="PF08067">
    <property type="entry name" value="ROKNT"/>
    <property type="match status" value="1"/>
</dbReference>
<dbReference type="SMART" id="SM00322">
    <property type="entry name" value="KH"/>
    <property type="match status" value="3"/>
</dbReference>
<dbReference type="SUPFAM" id="SSF54791">
    <property type="entry name" value="Eukaryotic type KH-domain (KH-domain type I)"/>
    <property type="match status" value="3"/>
</dbReference>
<dbReference type="PROSITE" id="PS50084">
    <property type="entry name" value="KH_TYPE_1"/>
    <property type="match status" value="3"/>
</dbReference>
<comment type="function">
    <text evidence="1 2">One of the major pre-mRNA-binding proteins. Binds tenaciously to poly(C) sequences. Likely to play a role in the nuclear metabolism of hnRNAs, particularly for pre-mRNAs that contain cytidine-rich sequences. Can also bind poly(C) single-stranded DNA. Plays an important role in p53/TP53 response to DNA damage, acting at the level of both transcription activation and repression. When sumoylated, acts as a transcriptional coactivator of p53/TP53, playing a role in p21/CDKN1A and 14-3-3 sigma/SFN induction. As far as transcription repression is concerned, acts by interacting with long intergenic RNA p21 (lincRNA-p21), a non-coding RNA induced by p53/TP53. This interaction is necessary for the induction of apoptosis, but not cell cycle arrest (By similarity). As part of a ribonucleoprotein complex composed at least of ZNF827, HNRNPL and the circular RNA circZNF827 that nucleates the complex on chromatin, may negatively regulate the transcription of genes involved in neuronal differentiation (By similarity).</text>
</comment>
<comment type="subunit">
    <text evidence="2 3 4">Identified in the spliceosome C complex. Interacts with ANKRD28, RBM42 and ZIK1. Interacts with DDX1. Interacts with MDM2; this interaction leads to ubiquitination and proteasomal degradation. Interacts with p53/TP53. Interacts with BRDT (By similarity). Interacts with IVNS1ABP (By similarity). Interacts with PPIA/CYPA (By similarity). Part of a transcription inhibitory ribonucleoprotein complex composed at least of the circular RNA circZNF827, ZNF827 and HNRNPL (By similarity).</text>
</comment>
<comment type="subcellular location">
    <subcellularLocation>
        <location evidence="2">Cytoplasm</location>
    </subcellularLocation>
    <subcellularLocation>
        <location evidence="2">Nucleus</location>
        <location evidence="2">Nucleoplasm</location>
    </subcellularLocation>
    <subcellularLocation>
        <location evidence="2">Cell projection</location>
        <location evidence="2">Podosome</location>
    </subcellularLocation>
</comment>
<comment type="PTM">
    <text evidence="1">Sumoylated by CBX4. Sumoylation is increased upon DNA damage, such as that produced by doxorubicin, etoposide, UV light and camptothecin, due to enhanced CBX4 phosphorylation by HIPK2 under these conditions (By similarity).</text>
</comment>
<comment type="PTM">
    <text evidence="1">Ubiquitinated by MDM2. Doxorubicin treatment does not affect monoubiquitination, but slightly decreases HNRNPK poly-ubiquitination (By similarity).</text>
</comment>
<comment type="PTM">
    <text evidence="1">O-glycosylated (O-GlcNAcylated), in a cell cycle-dependent manner.</text>
</comment>
<protein>
    <recommendedName>
        <fullName>Heterogeneous nuclear ribonucleoprotein K</fullName>
        <shortName>hnRNP K</shortName>
    </recommendedName>
</protein>
<evidence type="ECO:0000250" key="1"/>
<evidence type="ECO:0000250" key="2">
    <source>
        <dbReference type="UniProtKB" id="P61978"/>
    </source>
</evidence>
<evidence type="ECO:0000250" key="3">
    <source>
        <dbReference type="UniProtKB" id="P61979"/>
    </source>
</evidence>
<evidence type="ECO:0000250" key="4">
    <source>
        <dbReference type="UniProtKB" id="P61980"/>
    </source>
</evidence>
<evidence type="ECO:0000255" key="5">
    <source>
        <dbReference type="PROSITE-ProRule" id="PRU00117"/>
    </source>
</evidence>
<evidence type="ECO:0000256" key="6">
    <source>
        <dbReference type="SAM" id="MobiDB-lite"/>
    </source>
</evidence>
<gene>
    <name type="primary">HNRNPK</name>
    <name type="synonym">HNRPK</name>
    <name type="ORF">QflA-10396</name>
</gene>
<feature type="chain" id="PRO_0000288795" description="Heterogeneous nuclear ribonucleoprotein K">
    <location>
        <begin position="1"/>
        <end position="464"/>
    </location>
</feature>
<feature type="domain" description="KH 1" evidence="5">
    <location>
        <begin position="42"/>
        <end position="104"/>
    </location>
</feature>
<feature type="repeat" description="1-1">
    <location>
        <begin position="54"/>
        <end position="76"/>
    </location>
</feature>
<feature type="repeat" description="3-1">
    <location>
        <begin position="59"/>
        <end position="62"/>
    </location>
</feature>
<feature type="domain" description="KH 2" evidence="5">
    <location>
        <begin position="144"/>
        <end position="209"/>
    </location>
</feature>
<feature type="repeat" description="2-1">
    <location>
        <begin position="245"/>
        <end position="250"/>
    </location>
</feature>
<feature type="repeat" description="3-2">
    <location>
        <begin position="257"/>
        <end position="260"/>
    </location>
</feature>
<feature type="repeat" description="3-3">
    <location>
        <begin position="267"/>
        <end position="270"/>
    </location>
</feature>
<feature type="repeat" description="3-4">
    <location>
        <begin position="295"/>
        <end position="298"/>
    </location>
</feature>
<feature type="repeat" description="2-2">
    <location>
        <begin position="324"/>
        <end position="329"/>
    </location>
</feature>
<feature type="domain" description="KH 3" evidence="5">
    <location>
        <begin position="387"/>
        <end position="451"/>
    </location>
</feature>
<feature type="repeat" description="1-2">
    <location>
        <begin position="399"/>
        <end position="421"/>
    </location>
</feature>
<feature type="repeat" description="3-5">
    <location>
        <begin position="404"/>
        <end position="407"/>
    </location>
</feature>
<feature type="region of interest" description="Necessary for interaction with DDX1" evidence="1">
    <location>
        <begin position="1"/>
        <end position="276"/>
    </location>
</feature>
<feature type="region of interest" description="Disordered" evidence="6">
    <location>
        <begin position="1"/>
        <end position="37"/>
    </location>
</feature>
<feature type="region of interest" description="2 X 22 AA approximate repeats">
    <location>
        <begin position="54"/>
        <end position="421"/>
    </location>
</feature>
<feature type="region of interest" description="5 X 4 AA repeats of G-X-G-G">
    <location>
        <begin position="59"/>
        <end position="407"/>
    </location>
</feature>
<feature type="region of interest" description="RNA-binding RGG-box" evidence="1">
    <location>
        <begin position="236"/>
        <end position="273"/>
    </location>
</feature>
<feature type="region of interest" description="2 X 6 AA approximate repeats">
    <location>
        <begin position="245"/>
        <end position="329"/>
    </location>
</feature>
<feature type="region of interest" description="Disordered" evidence="6">
    <location>
        <begin position="250"/>
        <end position="329"/>
    </location>
</feature>
<feature type="compositionally biased region" description="Basic and acidic residues" evidence="6">
    <location>
        <begin position="19"/>
        <end position="37"/>
    </location>
</feature>
<feature type="compositionally biased region" description="Low complexity" evidence="6">
    <location>
        <begin position="252"/>
        <end position="266"/>
    </location>
</feature>
<feature type="compositionally biased region" description="Basic and acidic residues" evidence="6">
    <location>
        <begin position="276"/>
        <end position="285"/>
    </location>
</feature>
<feature type="modified residue" description="N-acetylmethionine" evidence="2">
    <location>
        <position position="1"/>
    </location>
</feature>
<feature type="modified residue" description="N6-acetyllysine; alternate" evidence="3">
    <location>
        <position position="34"/>
    </location>
</feature>
<feature type="modified residue" description="Phosphoserine" evidence="2">
    <location>
        <position position="36"/>
    </location>
</feature>
<feature type="modified residue" description="Phosphothreonine" evidence="3">
    <location>
        <position position="39"/>
    </location>
</feature>
<feature type="modified residue" description="Phosphoserine" evidence="2">
    <location>
        <position position="75"/>
    </location>
</feature>
<feature type="modified residue" description="Phosphoserine" evidence="2">
    <location>
        <position position="116"/>
    </location>
</feature>
<feature type="modified residue" description="N6-acetyllysine" evidence="3">
    <location>
        <position position="198"/>
    </location>
</feature>
<feature type="modified residue" description="Phosphoserine" evidence="2">
    <location>
        <position position="214"/>
    </location>
</feature>
<feature type="modified residue" description="Phosphoserine" evidence="2">
    <location>
        <position position="216"/>
    </location>
</feature>
<feature type="modified residue" description="N6-succinyllysine; alternate" evidence="3">
    <location>
        <position position="219"/>
    </location>
</feature>
<feature type="modified residue" description="Phosphoserine" evidence="2">
    <location>
        <position position="284"/>
    </location>
</feature>
<feature type="modified residue" description="Omega-N-methylarginine" evidence="2">
    <location>
        <position position="316"/>
    </location>
</feature>
<feature type="modified residue" description="Omega-N-methylarginine" evidence="3">
    <location>
        <position position="377"/>
    </location>
</feature>
<feature type="modified residue" description="Phosphoserine" evidence="2">
    <location>
        <position position="379"/>
    </location>
</feature>
<feature type="modified residue" description="Phosphotyrosine" evidence="2">
    <location>
        <position position="380"/>
    </location>
</feature>
<feature type="modified residue" description="N6-acetyllysine; alternate" evidence="3">
    <location>
        <position position="405"/>
    </location>
</feature>
<feature type="modified residue" description="Phosphoserine" evidence="2">
    <location>
        <position position="420"/>
    </location>
</feature>
<feature type="cross-link" description="Glycyl lysine isopeptide (Lys-Gly) (interchain with G-Cter in SUMO1); alternate" evidence="2">
    <location>
        <position position="34"/>
    </location>
</feature>
<feature type="cross-link" description="Glycyl lysine isopeptide (Lys-Gly) (interchain with G-Cter in SUMO2); alternate" evidence="2">
    <location>
        <position position="34"/>
    </location>
</feature>
<feature type="cross-link" description="Glycyl lysine isopeptide (Lys-Gly) (interchain with G-Cter in SUMO2)" evidence="2">
    <location>
        <position position="52"/>
    </location>
</feature>
<feature type="cross-link" description="Glycyl lysine isopeptide (Lys-Gly) (interchain with G-Cter in SUMO2)" evidence="2">
    <location>
        <position position="60"/>
    </location>
</feature>
<feature type="cross-link" description="Glycyl lysine isopeptide (Lys-Gly) (interchain with G-Cter in SUMO1); alternate" evidence="2">
    <location>
        <position position="163"/>
    </location>
</feature>
<feature type="cross-link" description="Glycyl lysine isopeptide (Lys-Gly) (interchain with G-Cter in SUMO2); alternate" evidence="2">
    <location>
        <position position="163"/>
    </location>
</feature>
<feature type="cross-link" description="Glycyl lysine isopeptide (Lys-Gly) (interchain with G-Cter in SUMO2); alternate" evidence="2">
    <location>
        <position position="219"/>
    </location>
</feature>
<feature type="cross-link" description="Glycyl lysine isopeptide (Lys-Gly) (interchain with G-Cter in SUMO2); alternate" evidence="2">
    <location>
        <position position="405"/>
    </location>
</feature>
<feature type="cross-link" description="Glycyl lysine isopeptide (Lys-Gly) (interchain with G-Cter in SUMO); alternate" evidence="1">
    <location>
        <position position="422"/>
    </location>
</feature>
<feature type="cross-link" description="Glycyl lysine isopeptide (Lys-Gly) (interchain with G-Cter in SUMO1); alternate" evidence="2">
    <location>
        <position position="422"/>
    </location>
</feature>
<feature type="cross-link" description="Glycyl lysine isopeptide (Lys-Gly) (interchain with G-Cter in SUMO2); alternate" evidence="2">
    <location>
        <position position="422"/>
    </location>
</feature>
<organism>
    <name type="scientific">Macaca fascicularis</name>
    <name type="common">Crab-eating macaque</name>
    <name type="synonym">Cynomolgus monkey</name>
    <dbReference type="NCBI Taxonomy" id="9541"/>
    <lineage>
        <taxon>Eukaryota</taxon>
        <taxon>Metazoa</taxon>
        <taxon>Chordata</taxon>
        <taxon>Craniata</taxon>
        <taxon>Vertebrata</taxon>
        <taxon>Euteleostomi</taxon>
        <taxon>Mammalia</taxon>
        <taxon>Eutheria</taxon>
        <taxon>Euarchontoglires</taxon>
        <taxon>Primates</taxon>
        <taxon>Haplorrhini</taxon>
        <taxon>Catarrhini</taxon>
        <taxon>Cercopithecidae</taxon>
        <taxon>Cercopithecinae</taxon>
        <taxon>Macaca</taxon>
    </lineage>
</organism>